<proteinExistence type="predicted"/>
<comment type="sequence caution" evidence="3">
    <conflict type="erroneous gene model prediction">
        <sequence resource="EMBL-CDS" id="AAF18242"/>
    </conflict>
</comment>
<comment type="sequence caution" evidence="3">
    <conflict type="erroneous gene model prediction">
        <sequence resource="EMBL-CDS" id="AAF18243"/>
    </conflict>
</comment>
<reference key="1">
    <citation type="journal article" date="2000" name="Nature">
        <title>Sequence and analysis of chromosome 1 of the plant Arabidopsis thaliana.</title>
        <authorList>
            <person name="Theologis A."/>
            <person name="Ecker J.R."/>
            <person name="Palm C.J."/>
            <person name="Federspiel N.A."/>
            <person name="Kaul S."/>
            <person name="White O."/>
            <person name="Alonso J."/>
            <person name="Altafi H."/>
            <person name="Araujo R."/>
            <person name="Bowman C.L."/>
            <person name="Brooks S.Y."/>
            <person name="Buehler E."/>
            <person name="Chan A."/>
            <person name="Chao Q."/>
            <person name="Chen H."/>
            <person name="Cheuk R.F."/>
            <person name="Chin C.W."/>
            <person name="Chung M.K."/>
            <person name="Conn L."/>
            <person name="Conway A.B."/>
            <person name="Conway A.R."/>
            <person name="Creasy T.H."/>
            <person name="Dewar K."/>
            <person name="Dunn P."/>
            <person name="Etgu P."/>
            <person name="Feldblyum T.V."/>
            <person name="Feng J.-D."/>
            <person name="Fong B."/>
            <person name="Fujii C.Y."/>
            <person name="Gill J.E."/>
            <person name="Goldsmith A.D."/>
            <person name="Haas B."/>
            <person name="Hansen N.F."/>
            <person name="Hughes B."/>
            <person name="Huizar L."/>
            <person name="Hunter J.L."/>
            <person name="Jenkins J."/>
            <person name="Johnson-Hopson C."/>
            <person name="Khan S."/>
            <person name="Khaykin E."/>
            <person name="Kim C.J."/>
            <person name="Koo H.L."/>
            <person name="Kremenetskaia I."/>
            <person name="Kurtz D.B."/>
            <person name="Kwan A."/>
            <person name="Lam B."/>
            <person name="Langin-Hooper S."/>
            <person name="Lee A."/>
            <person name="Lee J.M."/>
            <person name="Lenz C.A."/>
            <person name="Li J.H."/>
            <person name="Li Y.-P."/>
            <person name="Lin X."/>
            <person name="Liu S.X."/>
            <person name="Liu Z.A."/>
            <person name="Luros J.S."/>
            <person name="Maiti R."/>
            <person name="Marziali A."/>
            <person name="Militscher J."/>
            <person name="Miranda M."/>
            <person name="Nguyen M."/>
            <person name="Nierman W.C."/>
            <person name="Osborne B.I."/>
            <person name="Pai G."/>
            <person name="Peterson J."/>
            <person name="Pham P.K."/>
            <person name="Rizzo M."/>
            <person name="Rooney T."/>
            <person name="Rowley D."/>
            <person name="Sakano H."/>
            <person name="Salzberg S.L."/>
            <person name="Schwartz J.R."/>
            <person name="Shinn P."/>
            <person name="Southwick A.M."/>
            <person name="Sun H."/>
            <person name="Tallon L.J."/>
            <person name="Tambunga G."/>
            <person name="Toriumi M.J."/>
            <person name="Town C.D."/>
            <person name="Utterback T."/>
            <person name="Van Aken S."/>
            <person name="Vaysberg M."/>
            <person name="Vysotskaia V.S."/>
            <person name="Walker M."/>
            <person name="Wu D."/>
            <person name="Yu G."/>
            <person name="Fraser C.M."/>
            <person name="Venter J.C."/>
            <person name="Davis R.W."/>
        </authorList>
    </citation>
    <scope>NUCLEOTIDE SEQUENCE [LARGE SCALE GENOMIC DNA]</scope>
    <source>
        <strain>cv. Columbia</strain>
    </source>
</reference>
<reference key="2">
    <citation type="journal article" date="2017" name="Plant J.">
        <title>Araport11: a complete reannotation of the Arabidopsis thaliana reference genome.</title>
        <authorList>
            <person name="Cheng C.Y."/>
            <person name="Krishnakumar V."/>
            <person name="Chan A.P."/>
            <person name="Thibaud-Nissen F."/>
            <person name="Schobel S."/>
            <person name="Town C.D."/>
        </authorList>
    </citation>
    <scope>GENOME REANNOTATION</scope>
    <source>
        <strain>cv. Columbia</strain>
    </source>
</reference>
<reference key="3">
    <citation type="journal article" date="2009" name="Plant Cell">
        <title>NO VEIN mediates auxin-dependent specification and patterning in the Arabidopsis embryo, shoot, and root.</title>
        <authorList>
            <person name="Tsugeki R."/>
            <person name="Ditengou F.A."/>
            <person name="Sumi Y."/>
            <person name="Teale W."/>
            <person name="Palme K."/>
            <person name="Okada K."/>
        </authorList>
    </citation>
    <scope>GENE FAMILY</scope>
</reference>
<accession>A0A1P8ARG1</accession>
<accession>Q9SGC9</accession>
<accession>Q9SGD0</accession>
<sequence length="656" mass="73316">MQGNRDGSWSLRASAYGGSGNGNGGYLPQTTPVFHNYIVKQQQPIRYNFQTQQNLNFPHPQFGGGANVELIRIDKAVNNTRKSLIAAGDNVSSTRVSQSVLAQLQADTWRSLGIWMQDVPSLRQLMALEGKIIAFIHCFIGARGIVTLHDLEVAICQNEFVGCFDDLGLGPLLQHPLVLLYFPSVYCSTAPVKITSEEIISLLDSYLNTYDIDDVKLDEFLDFVAEAKAVTSKEKLGVRIQNLRMYVSFIQDAKRQEGEILKIVLTELHQKYRILSSKKQRQDKDYCGKHTRFNSPSSEENDSADYEVENVKRSDHFSSCPYSSAEEEVKQLGSSSKKRKAESRNHEKSDSPKLLRRGPSKLRRGHVKQKIPKSADDSDAQIFSVNDADFTLSEGALKLFISTWKETCKELSISVFVKKLLSFYNLGGSEVHGQIKIATAVSSFPFVGLLHVAKELVTEALEEQIPTEITITNLVAGYNDCTGTRSRANMPNPTKSCSTPVTLAHNSVSTDFSIRNQLHTGALWAAQAQESGKKGEEIAYRYFVAKYGKKALVKWVNEHSETGLPYDLIIENRGGNKEYVEVKATVSTGKDYFNLSVKEWEFANEKGESYVIAHVLLGNSNAILTQQRNLVKLRQDGHLRLLILMPSQRNEVNVAF</sequence>
<organism>
    <name type="scientific">Arabidopsis thaliana</name>
    <name type="common">Mouse-ear cress</name>
    <dbReference type="NCBI Taxonomy" id="3702"/>
    <lineage>
        <taxon>Eukaryota</taxon>
        <taxon>Viridiplantae</taxon>
        <taxon>Streptophyta</taxon>
        <taxon>Embryophyta</taxon>
        <taxon>Tracheophyta</taxon>
        <taxon>Spermatophyta</taxon>
        <taxon>Magnoliopsida</taxon>
        <taxon>eudicotyledons</taxon>
        <taxon>Gunneridae</taxon>
        <taxon>Pentapetalae</taxon>
        <taxon>rosids</taxon>
        <taxon>malvids</taxon>
        <taxon>Brassicales</taxon>
        <taxon>Brassicaceae</taxon>
        <taxon>Camelineae</taxon>
        <taxon>Arabidopsis</taxon>
    </lineage>
</organism>
<evidence type="ECO:0000256" key="1">
    <source>
        <dbReference type="SAM" id="MobiDB-lite"/>
    </source>
</evidence>
<evidence type="ECO:0000303" key="2">
    <source>
    </source>
</evidence>
<evidence type="ECO:0000305" key="3"/>
<evidence type="ECO:0000312" key="4">
    <source>
        <dbReference type="Araport" id="AT1G08300"/>
    </source>
</evidence>
<evidence type="ECO:0000312" key="5">
    <source>
        <dbReference type="EMBL" id="AAF18242.1"/>
    </source>
</evidence>
<evidence type="ECO:0000312" key="6">
    <source>
        <dbReference type="EMBL" id="AAF18243.1"/>
    </source>
</evidence>
<gene>
    <name evidence="2" type="primary">NVL</name>
    <name evidence="4" type="ordered locus">At1g08300</name>
    <name evidence="5" type="ORF">T23G18.16</name>
    <name evidence="6" type="ORF">T23G18.17</name>
</gene>
<name>NVL_ARATH</name>
<protein>
    <recommendedName>
        <fullName evidence="2">Protein NO VEIN-LIKE</fullName>
    </recommendedName>
</protein>
<dbReference type="EMBL" id="AC011438">
    <property type="protein sequence ID" value="AAF18242.1"/>
    <property type="status" value="ALT_SEQ"/>
    <property type="molecule type" value="Genomic_DNA"/>
</dbReference>
<dbReference type="EMBL" id="AC011438">
    <property type="protein sequence ID" value="AAF18243.1"/>
    <property type="status" value="ALT_SEQ"/>
    <property type="molecule type" value="Genomic_DNA"/>
</dbReference>
<dbReference type="EMBL" id="CP002684">
    <property type="protein sequence ID" value="ANM59243.1"/>
    <property type="molecule type" value="Genomic_DNA"/>
</dbReference>
<dbReference type="PIR" id="H86216">
    <property type="entry name" value="H86216"/>
</dbReference>
<dbReference type="RefSeq" id="NP_001321617.1">
    <property type="nucleotide sequence ID" value="NM_001331766.1"/>
</dbReference>
<dbReference type="FunCoup" id="A0A1P8ARG1">
    <property type="interactions" value="5"/>
</dbReference>
<dbReference type="iPTMnet" id="A0A1P8ARG1"/>
<dbReference type="PaxDb" id="3702-AT1G08300.1"/>
<dbReference type="ProteomicsDB" id="209570"/>
<dbReference type="EnsemblPlants" id="AT1G08300.2">
    <property type="protein sequence ID" value="AT1G08300.2"/>
    <property type="gene ID" value="AT1G08300"/>
</dbReference>
<dbReference type="GeneID" id="837350"/>
<dbReference type="Gramene" id="AT1G08300.2">
    <property type="protein sequence ID" value="AT1G08300.2"/>
    <property type="gene ID" value="AT1G08300"/>
</dbReference>
<dbReference type="KEGG" id="ath:AT1G08300"/>
<dbReference type="Araport" id="AT1G08300"/>
<dbReference type="TAIR" id="AT1G08300">
    <property type="gene designation" value="NVL"/>
</dbReference>
<dbReference type="InParanoid" id="A0A1P8ARG1"/>
<dbReference type="OMA" id="CGKHTRY"/>
<dbReference type="PRO" id="PR:A0A1P8ARG1"/>
<dbReference type="Proteomes" id="UP000006548">
    <property type="component" value="Chromosome 1"/>
</dbReference>
<dbReference type="ExpressionAtlas" id="A0A1P8ARG1">
    <property type="expression patterns" value="baseline and differential"/>
</dbReference>
<dbReference type="InterPro" id="IPR052957">
    <property type="entry name" value="Auxin_embryo_med"/>
</dbReference>
<dbReference type="InterPro" id="IPR024975">
    <property type="entry name" value="NOV_C"/>
</dbReference>
<dbReference type="PANTHER" id="PTHR32387:SF0">
    <property type="entry name" value="PROTEIN NO VEIN"/>
    <property type="match status" value="1"/>
</dbReference>
<dbReference type="PANTHER" id="PTHR32387">
    <property type="entry name" value="WU:FJ29H11"/>
    <property type="match status" value="1"/>
</dbReference>
<dbReference type="Pfam" id="PF13020">
    <property type="entry name" value="NOV_C"/>
    <property type="match status" value="1"/>
</dbReference>
<keyword id="KW-1185">Reference proteome</keyword>
<feature type="chain" id="PRO_0000446982" description="Protein NO VEIN-LIKE">
    <location>
        <begin position="1"/>
        <end position="656"/>
    </location>
</feature>
<feature type="region of interest" description="Disordered" evidence="1">
    <location>
        <begin position="283"/>
        <end position="375"/>
    </location>
</feature>
<feature type="compositionally biased region" description="Acidic residues" evidence="1">
    <location>
        <begin position="299"/>
        <end position="308"/>
    </location>
</feature>
<feature type="compositionally biased region" description="Basic and acidic residues" evidence="1">
    <location>
        <begin position="342"/>
        <end position="353"/>
    </location>
</feature>
<feature type="compositionally biased region" description="Basic residues" evidence="1">
    <location>
        <begin position="354"/>
        <end position="371"/>
    </location>
</feature>